<accession>Q851W1</accession>
<accession>Q10GN2</accession>
<comment type="function">
    <text evidence="1">May be involved in the early secretory pathway.</text>
</comment>
<comment type="similarity">
    <text evidence="2">Belongs to the STXBP/unc-18/SEC1 family.</text>
</comment>
<dbReference type="EMBL" id="AC097280">
    <property type="protein sequence ID" value="AAO34501.1"/>
    <property type="molecule type" value="Genomic_DNA"/>
</dbReference>
<dbReference type="EMBL" id="DP000009">
    <property type="protein sequence ID" value="ABF97669.1"/>
    <property type="molecule type" value="Genomic_DNA"/>
</dbReference>
<dbReference type="EMBL" id="AP008209">
    <property type="protein sequence ID" value="BAF12591.1"/>
    <property type="molecule type" value="Genomic_DNA"/>
</dbReference>
<dbReference type="EMBL" id="AP014959">
    <property type="protein sequence ID" value="BAS85305.1"/>
    <property type="molecule type" value="Genomic_DNA"/>
</dbReference>
<dbReference type="EMBL" id="CM000140">
    <property type="protein sequence ID" value="EAZ27812.1"/>
    <property type="molecule type" value="Genomic_DNA"/>
</dbReference>
<dbReference type="EMBL" id="AK071474">
    <property type="protein sequence ID" value="BAG92512.1"/>
    <property type="molecule type" value="mRNA"/>
</dbReference>
<dbReference type="RefSeq" id="XP_015632234.1">
    <property type="nucleotide sequence ID" value="XM_015776748.1"/>
</dbReference>
<dbReference type="SMR" id="Q851W1"/>
<dbReference type="FunCoup" id="Q851W1">
    <property type="interactions" value="3561"/>
</dbReference>
<dbReference type="STRING" id="39947.Q851W1"/>
<dbReference type="PaxDb" id="39947-Q851W1"/>
<dbReference type="EnsemblPlants" id="Os03t0620800-01">
    <property type="protein sequence ID" value="Os03t0620800-01"/>
    <property type="gene ID" value="Os03g0620800"/>
</dbReference>
<dbReference type="Gramene" id="Os03t0620800-01">
    <property type="protein sequence ID" value="Os03t0620800-01"/>
    <property type="gene ID" value="Os03g0620800"/>
</dbReference>
<dbReference type="KEGG" id="dosa:Os03g0620800"/>
<dbReference type="eggNOG" id="KOG1301">
    <property type="taxonomic scope" value="Eukaryota"/>
</dbReference>
<dbReference type="HOGENOM" id="CLU_016216_3_1_1"/>
<dbReference type="InParanoid" id="Q851W1"/>
<dbReference type="OMA" id="VNDLRAW"/>
<dbReference type="OrthoDB" id="10251230at2759"/>
<dbReference type="Proteomes" id="UP000000763">
    <property type="component" value="Chromosome 3"/>
</dbReference>
<dbReference type="Proteomes" id="UP000007752">
    <property type="component" value="Chromosome 3"/>
</dbReference>
<dbReference type="Proteomes" id="UP000059680">
    <property type="component" value="Chromosome 3"/>
</dbReference>
<dbReference type="ExpressionAtlas" id="Q851W1">
    <property type="expression patterns" value="baseline and differential"/>
</dbReference>
<dbReference type="GO" id="GO:0000139">
    <property type="term" value="C:Golgi membrane"/>
    <property type="evidence" value="ECO:0000318"/>
    <property type="project" value="GO_Central"/>
</dbReference>
<dbReference type="GO" id="GO:0019905">
    <property type="term" value="F:syntaxin binding"/>
    <property type="evidence" value="ECO:0000318"/>
    <property type="project" value="GO_Central"/>
</dbReference>
<dbReference type="GO" id="GO:0006888">
    <property type="term" value="P:endoplasmic reticulum to Golgi vesicle-mediated transport"/>
    <property type="evidence" value="ECO:0000318"/>
    <property type="project" value="GO_Central"/>
</dbReference>
<dbReference type="GO" id="GO:0006886">
    <property type="term" value="P:intracellular protein transport"/>
    <property type="evidence" value="ECO:0000318"/>
    <property type="project" value="GO_Central"/>
</dbReference>
<dbReference type="GO" id="GO:0006890">
    <property type="term" value="P:retrograde vesicle-mediated transport, Golgi to endoplasmic reticulum"/>
    <property type="evidence" value="ECO:0000318"/>
    <property type="project" value="GO_Central"/>
</dbReference>
<dbReference type="Gene3D" id="1.25.40.60">
    <property type="match status" value="1"/>
</dbReference>
<dbReference type="Gene3D" id="3.40.50.1910">
    <property type="match status" value="1"/>
</dbReference>
<dbReference type="Gene3D" id="3.40.50.2060">
    <property type="match status" value="1"/>
</dbReference>
<dbReference type="Gene3D" id="3.90.830.10">
    <property type="entry name" value="Syntaxin Binding Protein 1, Chain A, domain 2"/>
    <property type="match status" value="1"/>
</dbReference>
<dbReference type="InterPro" id="IPR043154">
    <property type="entry name" value="Sec-1-like_dom1"/>
</dbReference>
<dbReference type="InterPro" id="IPR043127">
    <property type="entry name" value="Sec-1-like_dom3a"/>
</dbReference>
<dbReference type="InterPro" id="IPR001619">
    <property type="entry name" value="Sec1-like"/>
</dbReference>
<dbReference type="InterPro" id="IPR027482">
    <property type="entry name" value="Sec1-like_dom2"/>
</dbReference>
<dbReference type="InterPro" id="IPR036045">
    <property type="entry name" value="Sec1-like_sf"/>
</dbReference>
<dbReference type="PANTHER" id="PTHR11679">
    <property type="entry name" value="VESICLE PROTEIN SORTING-ASSOCIATED"/>
    <property type="match status" value="1"/>
</dbReference>
<dbReference type="Pfam" id="PF00995">
    <property type="entry name" value="Sec1"/>
    <property type="match status" value="1"/>
</dbReference>
<dbReference type="PIRSF" id="PIRSF005715">
    <property type="entry name" value="VPS45_Sec1"/>
    <property type="match status" value="1"/>
</dbReference>
<dbReference type="SUPFAM" id="SSF56815">
    <property type="entry name" value="Sec1/munc18-like (SM) proteins"/>
    <property type="match status" value="1"/>
</dbReference>
<reference key="1">
    <citation type="journal article" date="2005" name="Genome Res.">
        <title>Sequence, annotation, and analysis of synteny between rice chromosome 3 and diverged grass species.</title>
        <authorList>
            <consortium name="The rice chromosome 3 sequencing consortium"/>
            <person name="Buell C.R."/>
            <person name="Yuan Q."/>
            <person name="Ouyang S."/>
            <person name="Liu J."/>
            <person name="Zhu W."/>
            <person name="Wang A."/>
            <person name="Maiti R."/>
            <person name="Haas B."/>
            <person name="Wortman J."/>
            <person name="Pertea M."/>
            <person name="Jones K.M."/>
            <person name="Kim M."/>
            <person name="Overton L."/>
            <person name="Tsitrin T."/>
            <person name="Fadrosh D."/>
            <person name="Bera J."/>
            <person name="Weaver B."/>
            <person name="Jin S."/>
            <person name="Johri S."/>
            <person name="Reardon M."/>
            <person name="Webb K."/>
            <person name="Hill J."/>
            <person name="Moffat K."/>
            <person name="Tallon L."/>
            <person name="Van Aken S."/>
            <person name="Lewis M."/>
            <person name="Utterback T."/>
            <person name="Feldblyum T."/>
            <person name="Zismann V."/>
            <person name="Iobst S."/>
            <person name="Hsiao J."/>
            <person name="de Vazeille A.R."/>
            <person name="Salzberg S.L."/>
            <person name="White O."/>
            <person name="Fraser C.M."/>
            <person name="Yu Y."/>
            <person name="Kim H."/>
            <person name="Rambo T."/>
            <person name="Currie J."/>
            <person name="Collura K."/>
            <person name="Kernodle-Thompson S."/>
            <person name="Wei F."/>
            <person name="Kudrna K."/>
            <person name="Ammiraju J.S.S."/>
            <person name="Luo M."/>
            <person name="Goicoechea J.L."/>
            <person name="Wing R.A."/>
            <person name="Henry D."/>
            <person name="Oates R."/>
            <person name="Palmer M."/>
            <person name="Pries G."/>
            <person name="Saski C."/>
            <person name="Simmons J."/>
            <person name="Soderlund C."/>
            <person name="Nelson W."/>
            <person name="de la Bastide M."/>
            <person name="Spiegel L."/>
            <person name="Nascimento L."/>
            <person name="Huang E."/>
            <person name="Preston R."/>
            <person name="Zutavern T."/>
            <person name="Palmer L."/>
            <person name="O'Shaughnessy A."/>
            <person name="Dike S."/>
            <person name="McCombie W.R."/>
            <person name="Minx P."/>
            <person name="Cordum H."/>
            <person name="Wilson R."/>
            <person name="Jin W."/>
            <person name="Lee H.R."/>
            <person name="Jiang J."/>
            <person name="Jackson S."/>
        </authorList>
    </citation>
    <scope>NUCLEOTIDE SEQUENCE [LARGE SCALE GENOMIC DNA]</scope>
    <source>
        <strain>cv. Nipponbare</strain>
    </source>
</reference>
<reference key="2">
    <citation type="journal article" date="2005" name="Nature">
        <title>The map-based sequence of the rice genome.</title>
        <authorList>
            <consortium name="International rice genome sequencing project (IRGSP)"/>
        </authorList>
    </citation>
    <scope>NUCLEOTIDE SEQUENCE [LARGE SCALE GENOMIC DNA]</scope>
    <source>
        <strain>cv. Nipponbare</strain>
    </source>
</reference>
<reference key="3">
    <citation type="journal article" date="2008" name="Nucleic Acids Res.">
        <title>The rice annotation project database (RAP-DB): 2008 update.</title>
        <authorList>
            <consortium name="The rice annotation project (RAP)"/>
        </authorList>
    </citation>
    <scope>GENOME REANNOTATION</scope>
    <source>
        <strain>cv. Nipponbare</strain>
    </source>
</reference>
<reference key="4">
    <citation type="journal article" date="2013" name="Rice">
        <title>Improvement of the Oryza sativa Nipponbare reference genome using next generation sequence and optical map data.</title>
        <authorList>
            <person name="Kawahara Y."/>
            <person name="de la Bastide M."/>
            <person name="Hamilton J.P."/>
            <person name="Kanamori H."/>
            <person name="McCombie W.R."/>
            <person name="Ouyang S."/>
            <person name="Schwartz D.C."/>
            <person name="Tanaka T."/>
            <person name="Wu J."/>
            <person name="Zhou S."/>
            <person name="Childs K.L."/>
            <person name="Davidson R.M."/>
            <person name="Lin H."/>
            <person name="Quesada-Ocampo L."/>
            <person name="Vaillancourt B."/>
            <person name="Sakai H."/>
            <person name="Lee S.S."/>
            <person name="Kim J."/>
            <person name="Numa H."/>
            <person name="Itoh T."/>
            <person name="Buell C.R."/>
            <person name="Matsumoto T."/>
        </authorList>
    </citation>
    <scope>GENOME REANNOTATION</scope>
    <source>
        <strain>cv. Nipponbare</strain>
    </source>
</reference>
<reference key="5">
    <citation type="journal article" date="2005" name="PLoS Biol.">
        <title>The genomes of Oryza sativa: a history of duplications.</title>
        <authorList>
            <person name="Yu J."/>
            <person name="Wang J."/>
            <person name="Lin W."/>
            <person name="Li S."/>
            <person name="Li H."/>
            <person name="Zhou J."/>
            <person name="Ni P."/>
            <person name="Dong W."/>
            <person name="Hu S."/>
            <person name="Zeng C."/>
            <person name="Zhang J."/>
            <person name="Zhang Y."/>
            <person name="Li R."/>
            <person name="Xu Z."/>
            <person name="Li S."/>
            <person name="Li X."/>
            <person name="Zheng H."/>
            <person name="Cong L."/>
            <person name="Lin L."/>
            <person name="Yin J."/>
            <person name="Geng J."/>
            <person name="Li G."/>
            <person name="Shi J."/>
            <person name="Liu J."/>
            <person name="Lv H."/>
            <person name="Li J."/>
            <person name="Wang J."/>
            <person name="Deng Y."/>
            <person name="Ran L."/>
            <person name="Shi X."/>
            <person name="Wang X."/>
            <person name="Wu Q."/>
            <person name="Li C."/>
            <person name="Ren X."/>
            <person name="Wang J."/>
            <person name="Wang X."/>
            <person name="Li D."/>
            <person name="Liu D."/>
            <person name="Zhang X."/>
            <person name="Ji Z."/>
            <person name="Zhao W."/>
            <person name="Sun Y."/>
            <person name="Zhang Z."/>
            <person name="Bao J."/>
            <person name="Han Y."/>
            <person name="Dong L."/>
            <person name="Ji J."/>
            <person name="Chen P."/>
            <person name="Wu S."/>
            <person name="Liu J."/>
            <person name="Xiao Y."/>
            <person name="Bu D."/>
            <person name="Tan J."/>
            <person name="Yang L."/>
            <person name="Ye C."/>
            <person name="Zhang J."/>
            <person name="Xu J."/>
            <person name="Zhou Y."/>
            <person name="Yu Y."/>
            <person name="Zhang B."/>
            <person name="Zhuang S."/>
            <person name="Wei H."/>
            <person name="Liu B."/>
            <person name="Lei M."/>
            <person name="Yu H."/>
            <person name="Li Y."/>
            <person name="Xu H."/>
            <person name="Wei S."/>
            <person name="He X."/>
            <person name="Fang L."/>
            <person name="Zhang Z."/>
            <person name="Zhang Y."/>
            <person name="Huang X."/>
            <person name="Su Z."/>
            <person name="Tong W."/>
            <person name="Li J."/>
            <person name="Tong Z."/>
            <person name="Li S."/>
            <person name="Ye J."/>
            <person name="Wang L."/>
            <person name="Fang L."/>
            <person name="Lei T."/>
            <person name="Chen C.-S."/>
            <person name="Chen H.-C."/>
            <person name="Xu Z."/>
            <person name="Li H."/>
            <person name="Huang H."/>
            <person name="Zhang F."/>
            <person name="Xu H."/>
            <person name="Li N."/>
            <person name="Zhao C."/>
            <person name="Li S."/>
            <person name="Dong L."/>
            <person name="Huang Y."/>
            <person name="Li L."/>
            <person name="Xi Y."/>
            <person name="Qi Q."/>
            <person name="Li W."/>
            <person name="Zhang B."/>
            <person name="Hu W."/>
            <person name="Zhang Y."/>
            <person name="Tian X."/>
            <person name="Jiao Y."/>
            <person name="Liang X."/>
            <person name="Jin J."/>
            <person name="Gao L."/>
            <person name="Zheng W."/>
            <person name="Hao B."/>
            <person name="Liu S.-M."/>
            <person name="Wang W."/>
            <person name="Yuan L."/>
            <person name="Cao M."/>
            <person name="McDermott J."/>
            <person name="Samudrala R."/>
            <person name="Wang J."/>
            <person name="Wong G.K.-S."/>
            <person name="Yang H."/>
        </authorList>
    </citation>
    <scope>NUCLEOTIDE SEQUENCE [LARGE SCALE GENOMIC DNA]</scope>
    <source>
        <strain>cv. Nipponbare</strain>
    </source>
</reference>
<reference key="6">
    <citation type="journal article" date="2003" name="Science">
        <title>Collection, mapping, and annotation of over 28,000 cDNA clones from japonica rice.</title>
        <authorList>
            <consortium name="The rice full-length cDNA consortium"/>
        </authorList>
    </citation>
    <scope>NUCLEOTIDE SEQUENCE [LARGE SCALE MRNA]</scope>
    <source>
        <strain>cv. Nipponbare</strain>
    </source>
</reference>
<protein>
    <recommendedName>
        <fullName>SEC1 family transport protein SLY1</fullName>
    </recommendedName>
</protein>
<gene>
    <name type="primary">SLY1</name>
    <name type="ordered locus">Os03g0620800</name>
    <name type="ordered locus">LOC_Os03g42320</name>
    <name evidence="3" type="ORF">OsJ_11759</name>
    <name type="ORF">OSJNBb0111B07.11</name>
</gene>
<proteinExistence type="evidence at transcript level"/>
<keyword id="KW-0653">Protein transport</keyword>
<keyword id="KW-1185">Reference proteome</keyword>
<keyword id="KW-0813">Transport</keyword>
<evidence type="ECO:0000250" key="1"/>
<evidence type="ECO:0000305" key="2"/>
<evidence type="ECO:0000312" key="3">
    <source>
        <dbReference type="EMBL" id="EAZ27812.1"/>
    </source>
</evidence>
<sequence length="623" mass="67816">MALTLRKKQLDSIVRMLHLNQQLQGSPDGVGGGVGSAEEEEAYKILVMDSPCVALLAPVLRVGELRRHGVTLHLNIDKARQQVPDAPAVYLLRPTAANVDRVAADAAAGLYASFHLNFSTCVPRALLERLASATAASRSAHRVARVADQYLDFVCLEEGLFSLAQPRAYVALNDPAAAEADITALVDAIALGLFCVVATLGAVPVIRCAGGGPAEMVAAALDARLRDHLIAKPNLFTEAASTAVASFQRPLLCLFDRNFELSVGIQHDWSYRPLVHDVLGLKSNKLKLPEKYDLDDTDPFWVANSWLQFPKVAEEIEAQLAKYKQDVDEVNQRTGGGRDGVEFDGTDLIGNTRHLMNAVNSLPELTERKKMIDKHTNIATALLGHIKGRSLDGYFECENSMLVDGTLDRTKLMNLLRGNGTKEDKLRLAVTYLLSFETPVPSDLEQVEAALRESEVDMSAFQYVKRIKSLNSQFAGASNTASKVNIVDWAEKLYGHSISAMTGVRNLLSDGKQLAATRAVEALMEGKPNPEVDNYLLFDPRAPKSGTAGQFRGPFREAIVFMIGGGNYIEYRSLTELTQRSQTTKQVIYGATEILNGVEFIQQLSELGQKAGLGGVSSSLPPQ</sequence>
<organism>
    <name type="scientific">Oryza sativa subsp. japonica</name>
    <name type="common">Rice</name>
    <dbReference type="NCBI Taxonomy" id="39947"/>
    <lineage>
        <taxon>Eukaryota</taxon>
        <taxon>Viridiplantae</taxon>
        <taxon>Streptophyta</taxon>
        <taxon>Embryophyta</taxon>
        <taxon>Tracheophyta</taxon>
        <taxon>Spermatophyta</taxon>
        <taxon>Magnoliopsida</taxon>
        <taxon>Liliopsida</taxon>
        <taxon>Poales</taxon>
        <taxon>Poaceae</taxon>
        <taxon>BOP clade</taxon>
        <taxon>Oryzoideae</taxon>
        <taxon>Oryzeae</taxon>
        <taxon>Oryzinae</taxon>
        <taxon>Oryza</taxon>
        <taxon>Oryza sativa</taxon>
    </lineage>
</organism>
<name>SLY1_ORYSJ</name>
<feature type="chain" id="PRO_0000247486" description="SEC1 family transport protein SLY1">
    <location>
        <begin position="1"/>
        <end position="623"/>
    </location>
</feature>